<reference key="1">
    <citation type="submission" date="2002-11" db="EMBL/GenBank/DDBJ databases">
        <title>Identification of complete keratin-associated protein (KAP) gene cluster spanning 800 kb region on human chromosome 21q22.11.</title>
        <authorList>
            <person name="Obayashi I."/>
            <person name="Shibuya K."/>
            <person name="Minoshima S."/>
            <person name="Kudoh J."/>
            <person name="Shimizu N."/>
        </authorList>
    </citation>
    <scope>NUCLEOTIDE SEQUENCE [MRNA]</scope>
    <source>
        <tissue>Hair root</tissue>
    </source>
</reference>
<reference key="2">
    <citation type="journal article" date="2004" name="Genome Res.">
        <title>The status, quality, and expansion of the NIH full-length cDNA project: the Mammalian Gene Collection (MGC).</title>
        <authorList>
            <consortium name="The MGC Project Team"/>
        </authorList>
    </citation>
    <scope>NUCLEOTIDE SEQUENCE [LARGE SCALE MRNA]</scope>
</reference>
<reference key="3">
    <citation type="journal article" date="2006" name="Science">
        <title>The consensus coding sequences of human breast and colorectal cancers.</title>
        <authorList>
            <person name="Sjoeblom T."/>
            <person name="Jones S."/>
            <person name="Wood L.D."/>
            <person name="Parsons D.W."/>
            <person name="Lin J."/>
            <person name="Barber T.D."/>
            <person name="Mandelker D."/>
            <person name="Leary R.J."/>
            <person name="Ptak J."/>
            <person name="Silliman N."/>
            <person name="Szabo S."/>
            <person name="Buckhaults P."/>
            <person name="Farrell C."/>
            <person name="Meeh P."/>
            <person name="Markowitz S.D."/>
            <person name="Willis J."/>
            <person name="Dawson D."/>
            <person name="Willson J.K.V."/>
            <person name="Gazdar A.F."/>
            <person name="Hartigan J."/>
            <person name="Wu L."/>
            <person name="Liu C."/>
            <person name="Parmigiani G."/>
            <person name="Park B.H."/>
            <person name="Bachman K.E."/>
            <person name="Papadopoulos N."/>
            <person name="Vogelstein B."/>
            <person name="Kinzler K.W."/>
            <person name="Velculescu V.E."/>
        </authorList>
    </citation>
    <scope>VARIANT [LARGE SCALE ANALYSIS] LEU-52</scope>
</reference>
<feature type="chain" id="PRO_0000223910" description="Keratin-associated protein 20-1">
    <location>
        <begin position="1"/>
        <end position="56"/>
    </location>
</feature>
<feature type="sequence variant" id="VAR_036562" description="In a breast cancer sample; somatic mutation." evidence="2">
    <original>S</original>
    <variation>L</variation>
    <location>
        <position position="52"/>
    </location>
</feature>
<proteinExistence type="inferred from homology"/>
<protein>
    <recommendedName>
        <fullName>Keratin-associated protein 20-1</fullName>
    </recommendedName>
</protein>
<dbReference type="EMBL" id="AB096955">
    <property type="protein sequence ID" value="BAE46370.1"/>
    <property type="molecule type" value="mRNA"/>
</dbReference>
<dbReference type="EMBL" id="BC104846">
    <property type="protein sequence ID" value="AAI04847.1"/>
    <property type="molecule type" value="mRNA"/>
</dbReference>
<dbReference type="EMBL" id="BC104872">
    <property type="protein sequence ID" value="AAI04873.1"/>
    <property type="molecule type" value="mRNA"/>
</dbReference>
<dbReference type="CCDS" id="CCDS13603.1"/>
<dbReference type="RefSeq" id="NP_853646.1">
    <property type="nucleotide sequence ID" value="NM_181615.2"/>
</dbReference>
<dbReference type="FunCoup" id="Q3LI63">
    <property type="interactions" value="3"/>
</dbReference>
<dbReference type="STRING" id="9606.ENSP00000335503"/>
<dbReference type="BioMuta" id="KRTAP20-1"/>
<dbReference type="DMDM" id="88909174"/>
<dbReference type="MassIVE" id="Q3LI63"/>
<dbReference type="PaxDb" id="9606-ENSP00000335503"/>
<dbReference type="DNASU" id="337975"/>
<dbReference type="Ensembl" id="ENST00000334664.3">
    <property type="protein sequence ID" value="ENSP00000335503.2"/>
    <property type="gene ID" value="ENSG00000244624.3"/>
</dbReference>
<dbReference type="GeneID" id="337975"/>
<dbReference type="KEGG" id="hsa:337975"/>
<dbReference type="MANE-Select" id="ENST00000334664.3">
    <property type="protein sequence ID" value="ENSP00000335503.2"/>
    <property type="RefSeq nucleotide sequence ID" value="NM_181615.2"/>
    <property type="RefSeq protein sequence ID" value="NP_853646.1"/>
</dbReference>
<dbReference type="UCSC" id="uc011ade.3">
    <property type="organism name" value="human"/>
</dbReference>
<dbReference type="AGR" id="HGNC:18943"/>
<dbReference type="CTD" id="337975"/>
<dbReference type="GeneCards" id="KRTAP20-1"/>
<dbReference type="HGNC" id="HGNC:18943">
    <property type="gene designation" value="KRTAP20-1"/>
</dbReference>
<dbReference type="HPA" id="ENSG00000244624">
    <property type="expression patterns" value="Not detected"/>
</dbReference>
<dbReference type="neXtProt" id="NX_Q3LI63"/>
<dbReference type="PharmGKB" id="PA134953935"/>
<dbReference type="VEuPathDB" id="HostDB:ENSG00000244624"/>
<dbReference type="eggNOG" id="ENOG502TDP7">
    <property type="taxonomic scope" value="Eukaryota"/>
</dbReference>
<dbReference type="GeneTree" id="ENSGT00950000183533"/>
<dbReference type="HOGENOM" id="CLU_184630_3_0_1"/>
<dbReference type="InParanoid" id="Q3LI63"/>
<dbReference type="OMA" id="CGFRRLA"/>
<dbReference type="PAN-GO" id="Q3LI63">
    <property type="GO annotations" value="0 GO annotations based on evolutionary models"/>
</dbReference>
<dbReference type="PathwayCommons" id="Q3LI63"/>
<dbReference type="Reactome" id="R-HSA-6805567">
    <property type="pathway name" value="Keratinization"/>
</dbReference>
<dbReference type="SignaLink" id="Q3LI63"/>
<dbReference type="BioGRID-ORCS" id="337975">
    <property type="hits" value="13 hits in 1090 CRISPR screens"/>
</dbReference>
<dbReference type="GenomeRNAi" id="337975"/>
<dbReference type="Pharos" id="Q3LI63">
    <property type="development level" value="Tdark"/>
</dbReference>
<dbReference type="PRO" id="PR:Q3LI63"/>
<dbReference type="Proteomes" id="UP000005640">
    <property type="component" value="Chromosome 21"/>
</dbReference>
<dbReference type="RNAct" id="Q3LI63">
    <property type="molecule type" value="protein"/>
</dbReference>
<dbReference type="Bgee" id="ENSG00000244624">
    <property type="expression patterns" value="Expressed in sural nerve and 21 other cell types or tissues"/>
</dbReference>
<dbReference type="GO" id="GO:0005829">
    <property type="term" value="C:cytosol"/>
    <property type="evidence" value="ECO:0000304"/>
    <property type="project" value="Reactome"/>
</dbReference>
<dbReference type="GO" id="GO:0005882">
    <property type="term" value="C:intermediate filament"/>
    <property type="evidence" value="ECO:0007669"/>
    <property type="project" value="UniProtKB-KW"/>
</dbReference>
<dbReference type="InterPro" id="IPR052878">
    <property type="entry name" value="KRTAP_matrix"/>
</dbReference>
<dbReference type="InterPro" id="IPR021743">
    <property type="entry name" value="KRTAP_type8/19/20/21/22"/>
</dbReference>
<dbReference type="PANTHER" id="PTHR39653:SF4">
    <property type="entry name" value="KERATIN-ASSOCIATED PROTEIN 20-1"/>
    <property type="match status" value="1"/>
</dbReference>
<dbReference type="PANTHER" id="PTHR39653">
    <property type="entry name" value="KERATIN-ASSOCIATED PROTEIN 20-2"/>
    <property type="match status" value="1"/>
</dbReference>
<dbReference type="Pfam" id="PF11759">
    <property type="entry name" value="KRTAP"/>
    <property type="match status" value="1"/>
</dbReference>
<keyword id="KW-0416">Keratin</keyword>
<keyword id="KW-1185">Reference proteome</keyword>
<keyword id="KW-0677">Repeat</keyword>
<gene>
    <name type="primary">KRTAP20-1</name>
    <name type="synonym">KAP20.1</name>
</gene>
<accession>Q3LI63</accession>
<sequence>MIYYSNYYGGYGYGGLGCGYGCGYRGYGCGYGGYGGYGNGYYCPSCYGRYWSYGFY</sequence>
<organism>
    <name type="scientific">Homo sapiens</name>
    <name type="common">Human</name>
    <dbReference type="NCBI Taxonomy" id="9606"/>
    <lineage>
        <taxon>Eukaryota</taxon>
        <taxon>Metazoa</taxon>
        <taxon>Chordata</taxon>
        <taxon>Craniata</taxon>
        <taxon>Vertebrata</taxon>
        <taxon>Euteleostomi</taxon>
        <taxon>Mammalia</taxon>
        <taxon>Eutheria</taxon>
        <taxon>Euarchontoglires</taxon>
        <taxon>Primates</taxon>
        <taxon>Haplorrhini</taxon>
        <taxon>Catarrhini</taxon>
        <taxon>Hominidae</taxon>
        <taxon>Homo</taxon>
    </lineage>
</organism>
<name>KR201_HUMAN</name>
<comment type="function">
    <text>In the hair cortex, hair keratin intermediate filaments are embedded in an interfilamentous matrix, consisting of hair keratin-associated proteins (KRTAP), which are essential for the formation of a rigid and resistant hair shaft through their extensive disulfide bond cross-linking with abundant cysteine residues of hair keratins. The matrix proteins include the high-sulfur and high-glycine-tyrosine keratins.</text>
</comment>
<comment type="subunit">
    <text evidence="1">Interacts with hair keratins.</text>
</comment>
<comment type="similarity">
    <text evidence="3">Belongs to the KRTAP type 20 family.</text>
</comment>
<evidence type="ECO:0000250" key="1"/>
<evidence type="ECO:0000269" key="2">
    <source>
    </source>
</evidence>
<evidence type="ECO:0000305" key="3"/>